<name>GPMI_MESFL</name>
<keyword id="KW-0324">Glycolysis</keyword>
<keyword id="KW-0413">Isomerase</keyword>
<keyword id="KW-0464">Manganese</keyword>
<keyword id="KW-0479">Metal-binding</keyword>
<keyword id="KW-1185">Reference proteome</keyword>
<reference key="1">
    <citation type="submission" date="2004-06" db="EMBL/GenBank/DDBJ databases">
        <authorList>
            <person name="Birren B.W."/>
            <person name="Stange-Thomann N."/>
            <person name="Hafez N."/>
            <person name="DeCaprio D."/>
            <person name="Fisher S."/>
            <person name="Butler J."/>
            <person name="Elkins T."/>
            <person name="Kodira C.D."/>
            <person name="Major J."/>
            <person name="Wang S."/>
            <person name="Nicol R."/>
            <person name="Nusbaum C."/>
        </authorList>
    </citation>
    <scope>NUCLEOTIDE SEQUENCE [LARGE SCALE GENOMIC DNA]</scope>
    <source>
        <strain>ATCC 33453 / NBRC 100688 / NCTC 11704 / L1</strain>
    </source>
</reference>
<gene>
    <name evidence="1" type="primary">gpmI</name>
    <name type="ordered locus">Mfl502</name>
</gene>
<dbReference type="EC" id="5.4.2.12" evidence="1"/>
<dbReference type="EMBL" id="AE017263">
    <property type="protein sequence ID" value="AAT75860.1"/>
    <property type="molecule type" value="Genomic_DNA"/>
</dbReference>
<dbReference type="RefSeq" id="WP_011183400.1">
    <property type="nucleotide sequence ID" value="NC_006055.1"/>
</dbReference>
<dbReference type="RefSeq" id="YP_053744.1">
    <property type="nucleotide sequence ID" value="NC_006055.1"/>
</dbReference>
<dbReference type="SMR" id="Q6F0W3"/>
<dbReference type="STRING" id="265311.Mfl502"/>
<dbReference type="PaxDb" id="265311-Mfl502"/>
<dbReference type="EnsemblBacteria" id="AAT75860">
    <property type="protein sequence ID" value="AAT75860"/>
    <property type="gene ID" value="Mfl502"/>
</dbReference>
<dbReference type="GeneID" id="2898084"/>
<dbReference type="KEGG" id="mfl:Mfl502"/>
<dbReference type="PATRIC" id="fig|265311.5.peg.507"/>
<dbReference type="eggNOG" id="COG0696">
    <property type="taxonomic scope" value="Bacteria"/>
</dbReference>
<dbReference type="HOGENOM" id="CLU_026099_2_0_14"/>
<dbReference type="OrthoDB" id="9800863at2"/>
<dbReference type="UniPathway" id="UPA00109">
    <property type="reaction ID" value="UER00186"/>
</dbReference>
<dbReference type="Proteomes" id="UP000006647">
    <property type="component" value="Chromosome"/>
</dbReference>
<dbReference type="GO" id="GO:0005829">
    <property type="term" value="C:cytosol"/>
    <property type="evidence" value="ECO:0007669"/>
    <property type="project" value="TreeGrafter"/>
</dbReference>
<dbReference type="GO" id="GO:0030145">
    <property type="term" value="F:manganese ion binding"/>
    <property type="evidence" value="ECO:0007669"/>
    <property type="project" value="UniProtKB-UniRule"/>
</dbReference>
<dbReference type="GO" id="GO:0004619">
    <property type="term" value="F:phosphoglycerate mutase activity"/>
    <property type="evidence" value="ECO:0007669"/>
    <property type="project" value="UniProtKB-EC"/>
</dbReference>
<dbReference type="GO" id="GO:0006007">
    <property type="term" value="P:glucose catabolic process"/>
    <property type="evidence" value="ECO:0007669"/>
    <property type="project" value="InterPro"/>
</dbReference>
<dbReference type="GO" id="GO:0006096">
    <property type="term" value="P:glycolytic process"/>
    <property type="evidence" value="ECO:0007669"/>
    <property type="project" value="UniProtKB-UniRule"/>
</dbReference>
<dbReference type="CDD" id="cd16010">
    <property type="entry name" value="iPGM"/>
    <property type="match status" value="1"/>
</dbReference>
<dbReference type="FunFam" id="3.40.1450.10:FF:000002">
    <property type="entry name" value="2,3-bisphosphoglycerate-independent phosphoglycerate mutase"/>
    <property type="match status" value="1"/>
</dbReference>
<dbReference type="Gene3D" id="3.40.720.10">
    <property type="entry name" value="Alkaline Phosphatase, subunit A"/>
    <property type="match status" value="1"/>
</dbReference>
<dbReference type="Gene3D" id="3.40.1450.10">
    <property type="entry name" value="BPG-independent phosphoglycerate mutase, domain B"/>
    <property type="match status" value="1"/>
</dbReference>
<dbReference type="HAMAP" id="MF_01038">
    <property type="entry name" value="GpmI"/>
    <property type="match status" value="1"/>
</dbReference>
<dbReference type="InterPro" id="IPR017850">
    <property type="entry name" value="Alkaline_phosphatase_core_sf"/>
</dbReference>
<dbReference type="InterPro" id="IPR011258">
    <property type="entry name" value="BPG-indep_PGM_N"/>
</dbReference>
<dbReference type="InterPro" id="IPR006124">
    <property type="entry name" value="Metalloenzyme"/>
</dbReference>
<dbReference type="InterPro" id="IPR036646">
    <property type="entry name" value="PGAM_B_sf"/>
</dbReference>
<dbReference type="InterPro" id="IPR005995">
    <property type="entry name" value="Pgm_bpd_ind"/>
</dbReference>
<dbReference type="NCBIfam" id="TIGR01307">
    <property type="entry name" value="pgm_bpd_ind"/>
    <property type="match status" value="1"/>
</dbReference>
<dbReference type="PANTHER" id="PTHR31637">
    <property type="entry name" value="2,3-BISPHOSPHOGLYCERATE-INDEPENDENT PHOSPHOGLYCERATE MUTASE"/>
    <property type="match status" value="1"/>
</dbReference>
<dbReference type="PANTHER" id="PTHR31637:SF0">
    <property type="entry name" value="2,3-BISPHOSPHOGLYCERATE-INDEPENDENT PHOSPHOGLYCERATE MUTASE"/>
    <property type="match status" value="1"/>
</dbReference>
<dbReference type="Pfam" id="PF06415">
    <property type="entry name" value="iPGM_N"/>
    <property type="match status" value="1"/>
</dbReference>
<dbReference type="Pfam" id="PF01676">
    <property type="entry name" value="Metalloenzyme"/>
    <property type="match status" value="1"/>
</dbReference>
<dbReference type="PIRSF" id="PIRSF001492">
    <property type="entry name" value="IPGAM"/>
    <property type="match status" value="1"/>
</dbReference>
<dbReference type="SUPFAM" id="SSF64158">
    <property type="entry name" value="2,3-Bisphosphoglycerate-independent phosphoglycerate mutase, substrate-binding domain"/>
    <property type="match status" value="1"/>
</dbReference>
<dbReference type="SUPFAM" id="SSF53649">
    <property type="entry name" value="Alkaline phosphatase-like"/>
    <property type="match status" value="1"/>
</dbReference>
<feature type="chain" id="PRO_1000135902" description="2,3-bisphosphoglycerate-independent phosphoglycerate mutase">
    <location>
        <begin position="1"/>
        <end position="532"/>
    </location>
</feature>
<feature type="active site" description="Phosphoserine intermediate" evidence="1">
    <location>
        <position position="63"/>
    </location>
</feature>
<feature type="binding site" evidence="1">
    <location>
        <position position="13"/>
    </location>
    <ligand>
        <name>Mn(2+)</name>
        <dbReference type="ChEBI" id="CHEBI:29035"/>
        <label>2</label>
    </ligand>
</feature>
<feature type="binding site" evidence="1">
    <location>
        <position position="63"/>
    </location>
    <ligand>
        <name>Mn(2+)</name>
        <dbReference type="ChEBI" id="CHEBI:29035"/>
        <label>2</label>
    </ligand>
</feature>
<feature type="binding site" evidence="1">
    <location>
        <position position="124"/>
    </location>
    <ligand>
        <name>substrate</name>
    </ligand>
</feature>
<feature type="binding site" evidence="1">
    <location>
        <begin position="154"/>
        <end position="155"/>
    </location>
    <ligand>
        <name>substrate</name>
    </ligand>
</feature>
<feature type="binding site" evidence="1">
    <location>
        <position position="187"/>
    </location>
    <ligand>
        <name>substrate</name>
    </ligand>
</feature>
<feature type="binding site" evidence="1">
    <location>
        <position position="193"/>
    </location>
    <ligand>
        <name>substrate</name>
    </ligand>
</feature>
<feature type="binding site" evidence="1">
    <location>
        <begin position="262"/>
        <end position="265"/>
    </location>
    <ligand>
        <name>substrate</name>
    </ligand>
</feature>
<feature type="binding site" evidence="1">
    <location>
        <position position="343"/>
    </location>
    <ligand>
        <name>substrate</name>
    </ligand>
</feature>
<feature type="binding site" evidence="1">
    <location>
        <position position="421"/>
    </location>
    <ligand>
        <name>Mn(2+)</name>
        <dbReference type="ChEBI" id="CHEBI:29035"/>
        <label>1</label>
    </ligand>
</feature>
<feature type="binding site" evidence="1">
    <location>
        <position position="425"/>
    </location>
    <ligand>
        <name>Mn(2+)</name>
        <dbReference type="ChEBI" id="CHEBI:29035"/>
        <label>1</label>
    </ligand>
</feature>
<feature type="binding site" evidence="1">
    <location>
        <position position="463"/>
    </location>
    <ligand>
        <name>Mn(2+)</name>
        <dbReference type="ChEBI" id="CHEBI:29035"/>
        <label>2</label>
    </ligand>
</feature>
<feature type="binding site" evidence="1">
    <location>
        <position position="464"/>
    </location>
    <ligand>
        <name>Mn(2+)</name>
        <dbReference type="ChEBI" id="CHEBI:29035"/>
        <label>2</label>
    </ligand>
</feature>
<feature type="binding site" evidence="1">
    <location>
        <position position="481"/>
    </location>
    <ligand>
        <name>Mn(2+)</name>
        <dbReference type="ChEBI" id="CHEBI:29035"/>
        <label>1</label>
    </ligand>
</feature>
<accession>Q6F0W3</accession>
<proteinExistence type="inferred from homology"/>
<comment type="function">
    <text evidence="1">Catalyzes the interconversion of 2-phosphoglycerate and 3-phosphoglycerate.</text>
</comment>
<comment type="catalytic activity">
    <reaction evidence="1">
        <text>(2R)-2-phosphoglycerate = (2R)-3-phosphoglycerate</text>
        <dbReference type="Rhea" id="RHEA:15901"/>
        <dbReference type="ChEBI" id="CHEBI:58272"/>
        <dbReference type="ChEBI" id="CHEBI:58289"/>
        <dbReference type="EC" id="5.4.2.12"/>
    </reaction>
</comment>
<comment type="cofactor">
    <cofactor evidence="1">
        <name>Mn(2+)</name>
        <dbReference type="ChEBI" id="CHEBI:29035"/>
    </cofactor>
    <text evidence="1">Binds 2 manganese ions per subunit.</text>
</comment>
<comment type="pathway">
    <text evidence="1">Carbohydrate degradation; glycolysis; pyruvate from D-glyceraldehyde 3-phosphate: step 3/5.</text>
</comment>
<comment type="subunit">
    <text evidence="1">Monomer.</text>
</comment>
<comment type="similarity">
    <text evidence="1">Belongs to the BPG-independent phosphoglycerate mutase family.</text>
</comment>
<organism>
    <name type="scientific">Mesoplasma florum (strain ATCC 33453 / NBRC 100688 / NCTC 11704 / L1)</name>
    <name type="common">Acholeplasma florum</name>
    <dbReference type="NCBI Taxonomy" id="265311"/>
    <lineage>
        <taxon>Bacteria</taxon>
        <taxon>Bacillati</taxon>
        <taxon>Mycoplasmatota</taxon>
        <taxon>Mollicutes</taxon>
        <taxon>Entomoplasmatales</taxon>
        <taxon>Entomoplasmataceae</taxon>
        <taxon>Mesoplasma</taxon>
    </lineage>
</organism>
<protein>
    <recommendedName>
        <fullName evidence="1">2,3-bisphosphoglycerate-independent phosphoglycerate mutase</fullName>
        <shortName evidence="1">BPG-independent PGAM</shortName>
        <shortName evidence="1">Phosphoglyceromutase</shortName>
        <shortName evidence="1">iPGM</shortName>
        <ecNumber evidence="1">5.4.2.12</ecNumber>
    </recommendedName>
</protein>
<evidence type="ECO:0000255" key="1">
    <source>
        <dbReference type="HAMAP-Rule" id="MF_01038"/>
    </source>
</evidence>
<sequence length="532" mass="59101">MNVKKPVILAILDGWGIEEAGVGNAVANADQKFVKEMMGMYPWVKAHASGEWVGLPEGQMGNSEVGHIHLGAGRINMESLAKLNHEVKVDGFLTNEVLVDTFKYVKEHNSALHLMGLFSDGGVHSHMNHMISMYKAAVKFGLTNIKFDLITDGRDTAPKVAEQYINQLLQVIKDNNNIGEIASISGRYFAMDRDKRFERSAAAYITMTERKVDQPKFTDPIEYVKAAYENGLDDEMIVPAYNASVVDSELKANDAMIFTNFRPDRAIQMASIMTNNNYPAWNDEAFKDVEFIGDKIRFVSTMKYADSVTSQFIAYPPTPLTNTLGEYISSLGLKQLRIAETEKIAHVTFFFDGGNDYFKNGLAKPEEISLPHASIDLISSPKVATYDLKPEMSAVEITDKLLEEVKKDEFDLIVLNFANCDMVGHTGNNDATVKGVKVLDEQLKRIHDEFVLKHNGVMVITADHGNAEIMIDETGGPNKKHTTSLVPIIVTDKTIELSDFDPAIAKVAPTILDIMGLEIPKEMTQPSMIIKK</sequence>